<proteinExistence type="inferred from homology"/>
<keyword id="KW-1015">Disulfide bond</keyword>
<keyword id="KW-0325">Glycoprotein</keyword>
<keyword id="KW-1185">Reference proteome</keyword>
<keyword id="KW-0964">Secreted</keyword>
<keyword id="KW-0732">Signal</keyword>
<reference key="1">
    <citation type="submission" date="2003-06" db="EMBL/GenBank/DDBJ databases">
        <title>LOC122650 on chromosome 14q11.2 is related to the RNase A superfamily and contains a unique amino-terminal pre-protein-like domain.</title>
        <authorList>
            <person name="Devor E.J."/>
            <person name="Moffat-Wilson K.A."/>
        </authorList>
    </citation>
    <scope>NUCLEOTIDE SEQUENCE [GENOMIC DNA]</scope>
</reference>
<feature type="signal peptide" evidence="2">
    <location>
        <begin position="1"/>
        <end position="26"/>
    </location>
</feature>
<feature type="chain" id="PRO_0000030960" description="Inactive ribonuclease-like protein 9">
    <location>
        <begin position="27"/>
        <end position="206"/>
    </location>
</feature>
<feature type="glycosylation site" description="N-linked (GlcNAc...) asparagine" evidence="2">
    <location>
        <position position="132"/>
    </location>
</feature>
<feature type="disulfide bond" evidence="1">
    <location>
        <begin position="99"/>
        <end position="154"/>
    </location>
</feature>
<feature type="disulfide bond" evidence="1">
    <location>
        <begin position="117"/>
        <end position="169"/>
    </location>
</feature>
<feature type="disulfide bond" evidence="1">
    <location>
        <begin position="124"/>
        <end position="131"/>
    </location>
</feature>
<comment type="function">
    <text evidence="1">Does not exhibit any ribonuclease activity.</text>
</comment>
<comment type="subcellular location">
    <subcellularLocation>
        <location evidence="3">Secreted</location>
    </subcellularLocation>
</comment>
<comment type="similarity">
    <text evidence="3">Belongs to the pancreatic ribonuclease family.</text>
</comment>
<protein>
    <recommendedName>
        <fullName>Inactive ribonuclease-like protein 9</fullName>
    </recommendedName>
</protein>
<accession>Q7YRG9</accession>
<sequence length="206" mass="24541">MMRTLITTHSLLLFLLLLQLLQPLQFQDMYYEDFYFPVSRTEEDFEDFLVEFQSTGPTRPPTKEKVKRRILVNPGMPLGDSGYCNYQIMRKNVYYKYSCVTEHYFLLMQYDELEKTCYNRFVPCKNGIRKCNRSKKLVEGVYCYLTEASNLPMCQYESFYRRGYVLITCTWQNEIQKLIPYTINDIVEPPNHRSLLNEDGVFVISP</sequence>
<gene>
    <name type="primary">RNASE9</name>
</gene>
<dbReference type="EMBL" id="AY330197">
    <property type="protein sequence ID" value="AAQ01507.1"/>
    <property type="molecule type" value="Genomic_DNA"/>
</dbReference>
<dbReference type="SMR" id="Q7YRG9"/>
<dbReference type="GlyCosmos" id="Q7YRG9">
    <property type="glycosylation" value="1 site, No reported glycans"/>
</dbReference>
<dbReference type="Proteomes" id="UP000233220">
    <property type="component" value="Whole Genome Shotgun Assembly"/>
</dbReference>
<dbReference type="GO" id="GO:0005576">
    <property type="term" value="C:extracellular region"/>
    <property type="evidence" value="ECO:0007669"/>
    <property type="project" value="UniProtKB-SubCell"/>
</dbReference>
<dbReference type="GO" id="GO:0003676">
    <property type="term" value="F:nucleic acid binding"/>
    <property type="evidence" value="ECO:0007669"/>
    <property type="project" value="InterPro"/>
</dbReference>
<dbReference type="GO" id="GO:0050830">
    <property type="term" value="P:defense response to Gram-positive bacterium"/>
    <property type="evidence" value="ECO:0007669"/>
    <property type="project" value="TreeGrafter"/>
</dbReference>
<dbReference type="CDD" id="cd00163">
    <property type="entry name" value="RNase_A"/>
    <property type="match status" value="1"/>
</dbReference>
<dbReference type="FunFam" id="3.10.130.10:FF:000003">
    <property type="entry name" value="Inactive ribonuclease-like protein 9"/>
    <property type="match status" value="1"/>
</dbReference>
<dbReference type="Gene3D" id="3.10.130.10">
    <property type="entry name" value="Ribonuclease A-like domain"/>
    <property type="match status" value="1"/>
</dbReference>
<dbReference type="InterPro" id="IPR001427">
    <property type="entry name" value="RNaseA"/>
</dbReference>
<dbReference type="InterPro" id="IPR036816">
    <property type="entry name" value="RNaseA-like_dom_sf"/>
</dbReference>
<dbReference type="InterPro" id="IPR023412">
    <property type="entry name" value="RNaseA_domain"/>
</dbReference>
<dbReference type="PANTHER" id="PTHR11437:SF14">
    <property type="entry name" value="INACTIVE RIBONUCLEASE-LIKE PROTEIN 9"/>
    <property type="match status" value="1"/>
</dbReference>
<dbReference type="PANTHER" id="PTHR11437">
    <property type="entry name" value="RIBONUCLEASE"/>
    <property type="match status" value="1"/>
</dbReference>
<dbReference type="Pfam" id="PF00074">
    <property type="entry name" value="RnaseA"/>
    <property type="match status" value="1"/>
</dbReference>
<dbReference type="SMART" id="SM00092">
    <property type="entry name" value="RNAse_Pc"/>
    <property type="match status" value="1"/>
</dbReference>
<dbReference type="SUPFAM" id="SSF54076">
    <property type="entry name" value="RNase A-like"/>
    <property type="match status" value="1"/>
</dbReference>
<evidence type="ECO:0000250" key="1"/>
<evidence type="ECO:0000255" key="2"/>
<evidence type="ECO:0000305" key="3"/>
<name>RNAS9_SAIBB</name>
<organism>
    <name type="scientific">Saimiri boliviensis boliviensis</name>
    <name type="common">Bolivian squirrel monkey</name>
    <dbReference type="NCBI Taxonomy" id="39432"/>
    <lineage>
        <taxon>Eukaryota</taxon>
        <taxon>Metazoa</taxon>
        <taxon>Chordata</taxon>
        <taxon>Craniata</taxon>
        <taxon>Vertebrata</taxon>
        <taxon>Euteleostomi</taxon>
        <taxon>Mammalia</taxon>
        <taxon>Eutheria</taxon>
        <taxon>Euarchontoglires</taxon>
        <taxon>Primates</taxon>
        <taxon>Haplorrhini</taxon>
        <taxon>Platyrrhini</taxon>
        <taxon>Cebidae</taxon>
        <taxon>Saimiriinae</taxon>
        <taxon>Saimiri</taxon>
    </lineage>
</organism>